<keyword id="KW-0066">ATP synthesis</keyword>
<keyword id="KW-1003">Cell membrane</keyword>
<keyword id="KW-0375">Hydrogen ion transport</keyword>
<keyword id="KW-0406">Ion transport</keyword>
<keyword id="KW-0472">Membrane</keyword>
<keyword id="KW-0813">Transport</keyword>
<comment type="function">
    <text evidence="1">Component of the A-type ATP synthase that produces ATP from ADP in the presence of a proton gradient across the membrane.</text>
</comment>
<comment type="subunit">
    <text evidence="1">Has multiple subunits with at least A(3), B(3), C, D, E, F, H, I and proteolipid K(x).</text>
</comment>
<comment type="subcellular location">
    <subcellularLocation>
        <location evidence="1">Cell membrane</location>
        <topology evidence="1">Peripheral membrane protein</topology>
    </subcellularLocation>
</comment>
<comment type="similarity">
    <text evidence="1">Belongs to the V-ATPase D subunit family.</text>
</comment>
<accession>A9AAQ2</accession>
<feature type="chain" id="PRO_1000114482" description="A-type ATP synthase subunit D">
    <location>
        <begin position="1"/>
        <end position="214"/>
    </location>
</feature>
<proteinExistence type="inferred from homology"/>
<organism>
    <name type="scientific">Methanococcus maripaludis (strain C6 / ATCC BAA-1332)</name>
    <dbReference type="NCBI Taxonomy" id="444158"/>
    <lineage>
        <taxon>Archaea</taxon>
        <taxon>Methanobacteriati</taxon>
        <taxon>Methanobacteriota</taxon>
        <taxon>Methanomada group</taxon>
        <taxon>Methanococci</taxon>
        <taxon>Methanococcales</taxon>
        <taxon>Methanococcaceae</taxon>
        <taxon>Methanococcus</taxon>
    </lineage>
</organism>
<evidence type="ECO:0000255" key="1">
    <source>
        <dbReference type="HAMAP-Rule" id="MF_00271"/>
    </source>
</evidence>
<gene>
    <name evidence="1" type="primary">atpD</name>
    <name type="ordered locus">MmarC6_1613</name>
</gene>
<reference key="1">
    <citation type="submission" date="2007-10" db="EMBL/GenBank/DDBJ databases">
        <title>Complete sequence of Methanococcus maripaludis C6.</title>
        <authorList>
            <consortium name="US DOE Joint Genome Institute"/>
            <person name="Copeland A."/>
            <person name="Lucas S."/>
            <person name="Lapidus A."/>
            <person name="Barry K."/>
            <person name="Glavina del Rio T."/>
            <person name="Dalin E."/>
            <person name="Tice H."/>
            <person name="Pitluck S."/>
            <person name="Clum A."/>
            <person name="Schmutz J."/>
            <person name="Larimer F."/>
            <person name="Land M."/>
            <person name="Hauser L."/>
            <person name="Kyrpides N."/>
            <person name="Mikhailova N."/>
            <person name="Sieprawska-Lupa M."/>
            <person name="Whitman W.B."/>
            <person name="Richardson P."/>
        </authorList>
    </citation>
    <scope>NUCLEOTIDE SEQUENCE [LARGE SCALE GENOMIC DNA]</scope>
    <source>
        <strain>C6 / ATCC BAA-1332</strain>
    </source>
</reference>
<dbReference type="EMBL" id="CP000867">
    <property type="protein sequence ID" value="ABX02425.1"/>
    <property type="molecule type" value="Genomic_DNA"/>
</dbReference>
<dbReference type="SMR" id="A9AAQ2"/>
<dbReference type="STRING" id="444158.MmarC6_1613"/>
<dbReference type="KEGG" id="mmx:MmarC6_1613"/>
<dbReference type="eggNOG" id="arCOG04101">
    <property type="taxonomic scope" value="Archaea"/>
</dbReference>
<dbReference type="HOGENOM" id="CLU_069688_2_1_2"/>
<dbReference type="OrthoDB" id="117390at2157"/>
<dbReference type="PhylomeDB" id="A9AAQ2"/>
<dbReference type="GO" id="GO:0005886">
    <property type="term" value="C:plasma membrane"/>
    <property type="evidence" value="ECO:0007669"/>
    <property type="project" value="UniProtKB-SubCell"/>
</dbReference>
<dbReference type="GO" id="GO:0005524">
    <property type="term" value="F:ATP binding"/>
    <property type="evidence" value="ECO:0007669"/>
    <property type="project" value="UniProtKB-UniRule"/>
</dbReference>
<dbReference type="GO" id="GO:0046933">
    <property type="term" value="F:proton-transporting ATP synthase activity, rotational mechanism"/>
    <property type="evidence" value="ECO:0007669"/>
    <property type="project" value="UniProtKB-UniRule"/>
</dbReference>
<dbReference type="GO" id="GO:0046961">
    <property type="term" value="F:proton-transporting ATPase activity, rotational mechanism"/>
    <property type="evidence" value="ECO:0007669"/>
    <property type="project" value="InterPro"/>
</dbReference>
<dbReference type="GO" id="GO:0042777">
    <property type="term" value="P:proton motive force-driven plasma membrane ATP synthesis"/>
    <property type="evidence" value="ECO:0007669"/>
    <property type="project" value="UniProtKB-UniRule"/>
</dbReference>
<dbReference type="FunFam" id="1.10.287.3240:FF:000007">
    <property type="entry name" value="V-type ATP synthase subunit D"/>
    <property type="match status" value="1"/>
</dbReference>
<dbReference type="Gene3D" id="1.10.287.3240">
    <property type="match status" value="1"/>
</dbReference>
<dbReference type="HAMAP" id="MF_00271">
    <property type="entry name" value="ATP_synth_D_arch"/>
    <property type="match status" value="1"/>
</dbReference>
<dbReference type="InterPro" id="IPR002699">
    <property type="entry name" value="V_ATPase_D"/>
</dbReference>
<dbReference type="NCBIfam" id="NF001545">
    <property type="entry name" value="PRK00373.1-4"/>
    <property type="match status" value="1"/>
</dbReference>
<dbReference type="NCBIfam" id="TIGR00309">
    <property type="entry name" value="V_ATPase_subD"/>
    <property type="match status" value="1"/>
</dbReference>
<dbReference type="PANTHER" id="PTHR11671">
    <property type="entry name" value="V-TYPE ATP SYNTHASE SUBUNIT D"/>
    <property type="match status" value="1"/>
</dbReference>
<dbReference type="Pfam" id="PF01813">
    <property type="entry name" value="ATP-synt_D"/>
    <property type="match status" value="1"/>
</dbReference>
<sequence>MADVNPTRMELLKLKGKIKLAEKGHKLLKQKRDALMMEFFEILDQASGIRDKVNDAISQAYKDLIMAQAVMGTLSVKEASFAAKNDNIDLDVDMRNIMGIDVPVFEISNVKRDISNRGYSPYGVSSKLDEAAKNFEEALELITELAEIETSIKLLAQEIITTKRRVNALEYVVIPKMNATKKYIAMRLEEMERENFFRLKIIKARMDAKEAEEA</sequence>
<protein>
    <recommendedName>
        <fullName evidence="1">A-type ATP synthase subunit D</fullName>
    </recommendedName>
</protein>
<name>AATD_METM6</name>